<dbReference type="EC" id="1.13.11.11" evidence="1"/>
<dbReference type="EMBL" id="CP000440">
    <property type="protein sequence ID" value="ABI88183.1"/>
    <property type="status" value="ALT_INIT"/>
    <property type="molecule type" value="Genomic_DNA"/>
</dbReference>
<dbReference type="RefSeq" id="WP_041491259.1">
    <property type="nucleotide sequence ID" value="NC_008390.1"/>
</dbReference>
<dbReference type="SMR" id="Q0BCE0"/>
<dbReference type="GeneID" id="93085171"/>
<dbReference type="KEGG" id="bam:Bamb_2627"/>
<dbReference type="PATRIC" id="fig|339670.21.peg.2274"/>
<dbReference type="eggNOG" id="COG3483">
    <property type="taxonomic scope" value="Bacteria"/>
</dbReference>
<dbReference type="UniPathway" id="UPA00333">
    <property type="reaction ID" value="UER00453"/>
</dbReference>
<dbReference type="Proteomes" id="UP000000662">
    <property type="component" value="Chromosome 1"/>
</dbReference>
<dbReference type="GO" id="GO:0020037">
    <property type="term" value="F:heme binding"/>
    <property type="evidence" value="ECO:0000250"/>
    <property type="project" value="UniProtKB"/>
</dbReference>
<dbReference type="GO" id="GO:0046872">
    <property type="term" value="F:metal ion binding"/>
    <property type="evidence" value="ECO:0007669"/>
    <property type="project" value="UniProtKB-KW"/>
</dbReference>
<dbReference type="GO" id="GO:0004833">
    <property type="term" value="F:tryptophan 2,3-dioxygenase activity"/>
    <property type="evidence" value="ECO:0000250"/>
    <property type="project" value="UniProtKB"/>
</dbReference>
<dbReference type="GO" id="GO:0019442">
    <property type="term" value="P:L-tryptophan catabolic process to acetyl-CoA"/>
    <property type="evidence" value="ECO:0007669"/>
    <property type="project" value="TreeGrafter"/>
</dbReference>
<dbReference type="GO" id="GO:0019441">
    <property type="term" value="P:L-tryptophan catabolic process to kynurenine"/>
    <property type="evidence" value="ECO:0000250"/>
    <property type="project" value="UniProtKB"/>
</dbReference>
<dbReference type="FunFam" id="1.20.58.480:FF:000001">
    <property type="entry name" value="Tryptophan 2,3-dioxygenase"/>
    <property type="match status" value="1"/>
</dbReference>
<dbReference type="Gene3D" id="1.20.58.480">
    <property type="match status" value="1"/>
</dbReference>
<dbReference type="HAMAP" id="MF_01972">
    <property type="entry name" value="T23O"/>
    <property type="match status" value="1"/>
</dbReference>
<dbReference type="InterPro" id="IPR037217">
    <property type="entry name" value="Trp/Indoleamine_2_3_dOase-like"/>
</dbReference>
<dbReference type="InterPro" id="IPR017485">
    <property type="entry name" value="Trp_2-3-dOase_bac"/>
</dbReference>
<dbReference type="InterPro" id="IPR004981">
    <property type="entry name" value="Trp_2_3_dOase"/>
</dbReference>
<dbReference type="NCBIfam" id="TIGR03036">
    <property type="entry name" value="trp_2_3_diox"/>
    <property type="match status" value="1"/>
</dbReference>
<dbReference type="PANTHER" id="PTHR10138">
    <property type="entry name" value="TRYPTOPHAN 2,3-DIOXYGENASE"/>
    <property type="match status" value="1"/>
</dbReference>
<dbReference type="PANTHER" id="PTHR10138:SF0">
    <property type="entry name" value="TRYPTOPHAN 2,3-DIOXYGENASE"/>
    <property type="match status" value="1"/>
</dbReference>
<dbReference type="Pfam" id="PF03301">
    <property type="entry name" value="Trp_dioxygenase"/>
    <property type="match status" value="1"/>
</dbReference>
<dbReference type="SUPFAM" id="SSF140959">
    <property type="entry name" value="Indolic compounds 2,3-dioxygenase-like"/>
    <property type="match status" value="1"/>
</dbReference>
<feature type="chain" id="PRO_0000360101" description="Tryptophan 2,3-dioxygenase">
    <location>
        <begin position="1"/>
        <end position="308"/>
    </location>
</feature>
<feature type="region of interest" description="Disordered" evidence="2">
    <location>
        <begin position="1"/>
        <end position="35"/>
    </location>
</feature>
<feature type="compositionally biased region" description="Low complexity" evidence="2">
    <location>
        <begin position="17"/>
        <end position="30"/>
    </location>
</feature>
<feature type="binding site" evidence="1">
    <location>
        <begin position="77"/>
        <end position="81"/>
    </location>
    <ligand>
        <name>substrate</name>
    </ligand>
</feature>
<feature type="binding site" evidence="1">
    <location>
        <position position="139"/>
    </location>
    <ligand>
        <name>substrate</name>
    </ligand>
</feature>
<feature type="binding site" evidence="1">
    <location>
        <position position="143"/>
    </location>
    <ligand>
        <name>substrate</name>
    </ligand>
</feature>
<feature type="binding site" description="axial binding residue" evidence="1">
    <location>
        <position position="266"/>
    </location>
    <ligand>
        <name>heme</name>
        <dbReference type="ChEBI" id="CHEBI:30413"/>
    </ligand>
    <ligandPart>
        <name>Fe</name>
        <dbReference type="ChEBI" id="CHEBI:18248"/>
    </ligandPart>
</feature>
<feature type="binding site" evidence="1">
    <location>
        <position position="280"/>
    </location>
    <ligand>
        <name>substrate</name>
    </ligand>
</feature>
<name>T23O_BURCM</name>
<evidence type="ECO:0000255" key="1">
    <source>
        <dbReference type="HAMAP-Rule" id="MF_01972"/>
    </source>
</evidence>
<evidence type="ECO:0000256" key="2">
    <source>
        <dbReference type="SAM" id="MobiDB-lite"/>
    </source>
</evidence>
<evidence type="ECO:0000305" key="3"/>
<protein>
    <recommendedName>
        <fullName evidence="1">Tryptophan 2,3-dioxygenase</fullName>
        <shortName evidence="1">TDO</shortName>
        <ecNumber evidence="1">1.13.11.11</ecNumber>
    </recommendedName>
    <alternativeName>
        <fullName evidence="1">Tryptamin 2,3-dioxygenase</fullName>
    </alternativeName>
    <alternativeName>
        <fullName evidence="1">Tryptophan oxygenase</fullName>
        <shortName evidence="1">TO</shortName>
        <shortName evidence="1">TRPO</shortName>
    </alternativeName>
    <alternativeName>
        <fullName evidence="1">Tryptophan pyrrolase</fullName>
    </alternativeName>
    <alternativeName>
        <fullName evidence="1">Tryptophanase</fullName>
    </alternativeName>
</protein>
<organism>
    <name type="scientific">Burkholderia ambifaria (strain ATCC BAA-244 / DSM 16087 / CCUG 44356 / LMG 19182 / AMMD)</name>
    <name type="common">Burkholderia cepacia (strain AMMD)</name>
    <dbReference type="NCBI Taxonomy" id="339670"/>
    <lineage>
        <taxon>Bacteria</taxon>
        <taxon>Pseudomonadati</taxon>
        <taxon>Pseudomonadota</taxon>
        <taxon>Betaproteobacteria</taxon>
        <taxon>Burkholderiales</taxon>
        <taxon>Burkholderiaceae</taxon>
        <taxon>Burkholderia</taxon>
        <taxon>Burkholderia cepacia complex</taxon>
    </lineage>
</organism>
<proteinExistence type="inferred from homology"/>
<accession>Q0BCE0</accession>
<keyword id="KW-0223">Dioxygenase</keyword>
<keyword id="KW-0349">Heme</keyword>
<keyword id="KW-0408">Iron</keyword>
<keyword id="KW-0479">Metal-binding</keyword>
<keyword id="KW-0560">Oxidoreductase</keyword>
<keyword id="KW-0823">Tryptophan catabolism</keyword>
<reference key="1">
    <citation type="submission" date="2006-08" db="EMBL/GenBank/DDBJ databases">
        <title>Complete sequence of chromosome 1 of Burkholderia cepacia AMMD.</title>
        <authorList>
            <person name="Copeland A."/>
            <person name="Lucas S."/>
            <person name="Lapidus A."/>
            <person name="Barry K."/>
            <person name="Detter J.C."/>
            <person name="Glavina del Rio T."/>
            <person name="Hammon N."/>
            <person name="Israni S."/>
            <person name="Pitluck S."/>
            <person name="Bruce D."/>
            <person name="Chain P."/>
            <person name="Malfatti S."/>
            <person name="Shin M."/>
            <person name="Vergez L."/>
            <person name="Schmutz J."/>
            <person name="Larimer F."/>
            <person name="Land M."/>
            <person name="Hauser L."/>
            <person name="Kyrpides N."/>
            <person name="Kim E."/>
            <person name="Parke J."/>
            <person name="Coenye T."/>
            <person name="Konstantinidis K."/>
            <person name="Ramette A."/>
            <person name="Tiedje J."/>
            <person name="Richardson P."/>
        </authorList>
    </citation>
    <scope>NUCLEOTIDE SEQUENCE [LARGE SCALE GENOMIC DNA]</scope>
    <source>
        <strain>ATCC BAA-244 / DSM 16087 / CCUG 44356 / LMG 19182 / AMMD</strain>
    </source>
</reference>
<sequence length="308" mass="35167">MQPPGDNAPAGCPFSGAHAAQPAHEAPHVPGDAAGEAGWHDAQLDFSKSMSYGDYLSLNSILDAQHPLSPDHNEMLFIIQHQTSELWMKLALFELRGALDAVRGDALPPAFKMLARVSRILEQLVQAWNVLSTMTPSEYSAMRPYLGQSSGFQSYQYRQLEFLLGNKNVQMLQPHAHRPDILEQVRATLEAPSFYDEVVRLLARRGFPIAPERLERDWTQPMRHDETVEAAWLEVYRHPQQHWELYEMAEELVDLEDAFRQWRFRHVTTVERIIGFKQGTGGTSGAPYLRKMLDVVLFPELWHVRTTL</sequence>
<comment type="function">
    <text evidence="1">Heme-dependent dioxygenase that catalyzes the oxidative cleavage of the L-tryptophan (L-Trp) pyrrole ring and converts L-tryptophan to N-formyl-L-kynurenine. Catalyzes the oxidative cleavage of the indole moiety.</text>
</comment>
<comment type="catalytic activity">
    <reaction evidence="1">
        <text>L-tryptophan + O2 = N-formyl-L-kynurenine</text>
        <dbReference type="Rhea" id="RHEA:24536"/>
        <dbReference type="ChEBI" id="CHEBI:15379"/>
        <dbReference type="ChEBI" id="CHEBI:57912"/>
        <dbReference type="ChEBI" id="CHEBI:58629"/>
        <dbReference type="EC" id="1.13.11.11"/>
    </reaction>
</comment>
<comment type="cofactor">
    <cofactor evidence="1">
        <name>heme</name>
        <dbReference type="ChEBI" id="CHEBI:30413"/>
    </cofactor>
    <text evidence="1">Binds 1 heme group per subunit.</text>
</comment>
<comment type="pathway">
    <text evidence="1">Amino-acid degradation; L-tryptophan degradation via kynurenine pathway; L-kynurenine from L-tryptophan: step 1/2.</text>
</comment>
<comment type="subunit">
    <text evidence="1">Homotetramer.</text>
</comment>
<comment type="similarity">
    <text evidence="1">Belongs to the tryptophan 2,3-dioxygenase family.</text>
</comment>
<comment type="sequence caution" evidence="3">
    <conflict type="erroneous initiation">
        <sequence resource="EMBL-CDS" id="ABI88183"/>
    </conflict>
</comment>
<gene>
    <name evidence="1" type="primary">kynA</name>
    <name type="ordered locus">Bamb_2627</name>
</gene>